<reference key="1">
    <citation type="submission" date="2002-11" db="EMBL/GenBank/DDBJ databases">
        <authorList>
            <person name="Mao Y."/>
            <person name="Xie Y."/>
            <person name="Wu H."/>
        </authorList>
    </citation>
    <scope>NUCLEOTIDE SEQUENCE [MRNA] (ISOFORM 2)</scope>
</reference>
<reference key="2">
    <citation type="journal article" date="2006" name="Nature">
        <title>The finished DNA sequence of human chromosome 12.</title>
        <authorList>
            <person name="Scherer S.E."/>
            <person name="Muzny D.M."/>
            <person name="Buhay C.J."/>
            <person name="Chen R."/>
            <person name="Cree A."/>
            <person name="Ding Y."/>
            <person name="Dugan-Rocha S."/>
            <person name="Gill R."/>
            <person name="Gunaratne P."/>
            <person name="Harris R.A."/>
            <person name="Hawes A.C."/>
            <person name="Hernandez J."/>
            <person name="Hodgson A.V."/>
            <person name="Hume J."/>
            <person name="Jackson A."/>
            <person name="Khan Z.M."/>
            <person name="Kovar-Smith C."/>
            <person name="Lewis L.R."/>
            <person name="Lozado R.J."/>
            <person name="Metzker M.L."/>
            <person name="Milosavljevic A."/>
            <person name="Miner G.R."/>
            <person name="Montgomery K.T."/>
            <person name="Morgan M.B."/>
            <person name="Nazareth L.V."/>
            <person name="Scott G."/>
            <person name="Sodergren E."/>
            <person name="Song X.-Z."/>
            <person name="Steffen D."/>
            <person name="Lovering R.C."/>
            <person name="Wheeler D.A."/>
            <person name="Worley K.C."/>
            <person name="Yuan Y."/>
            <person name="Zhang Z."/>
            <person name="Adams C.Q."/>
            <person name="Ansari-Lari M.A."/>
            <person name="Ayele M."/>
            <person name="Brown M.J."/>
            <person name="Chen G."/>
            <person name="Chen Z."/>
            <person name="Clerc-Blankenburg K.P."/>
            <person name="Davis C."/>
            <person name="Delgado O."/>
            <person name="Dinh H.H."/>
            <person name="Draper H."/>
            <person name="Gonzalez-Garay M.L."/>
            <person name="Havlak P."/>
            <person name="Jackson L.R."/>
            <person name="Jacob L.S."/>
            <person name="Kelly S.H."/>
            <person name="Li L."/>
            <person name="Li Z."/>
            <person name="Liu J."/>
            <person name="Liu W."/>
            <person name="Lu J."/>
            <person name="Maheshwari M."/>
            <person name="Nguyen B.-V."/>
            <person name="Okwuonu G.O."/>
            <person name="Pasternak S."/>
            <person name="Perez L.M."/>
            <person name="Plopper F.J.H."/>
            <person name="Santibanez J."/>
            <person name="Shen H."/>
            <person name="Tabor P.E."/>
            <person name="Verduzco D."/>
            <person name="Waldron L."/>
            <person name="Wang Q."/>
            <person name="Williams G.A."/>
            <person name="Zhang J."/>
            <person name="Zhou J."/>
            <person name="Allen C.C."/>
            <person name="Amin A.G."/>
            <person name="Anyalebechi V."/>
            <person name="Bailey M."/>
            <person name="Barbaria J.A."/>
            <person name="Bimage K.E."/>
            <person name="Bryant N.P."/>
            <person name="Burch P.E."/>
            <person name="Burkett C.E."/>
            <person name="Burrell K.L."/>
            <person name="Calderon E."/>
            <person name="Cardenas V."/>
            <person name="Carter K."/>
            <person name="Casias K."/>
            <person name="Cavazos I."/>
            <person name="Cavazos S.R."/>
            <person name="Ceasar H."/>
            <person name="Chacko J."/>
            <person name="Chan S.N."/>
            <person name="Chavez D."/>
            <person name="Christopoulos C."/>
            <person name="Chu J."/>
            <person name="Cockrell R."/>
            <person name="Cox C.D."/>
            <person name="Dang M."/>
            <person name="Dathorne S.R."/>
            <person name="David R."/>
            <person name="Davis C.M."/>
            <person name="Davy-Carroll L."/>
            <person name="Deshazo D.R."/>
            <person name="Donlin J.E."/>
            <person name="D'Souza L."/>
            <person name="Eaves K.A."/>
            <person name="Egan A."/>
            <person name="Emery-Cohen A.J."/>
            <person name="Escotto M."/>
            <person name="Flagg N."/>
            <person name="Forbes L.D."/>
            <person name="Gabisi A.M."/>
            <person name="Garza M."/>
            <person name="Hamilton C."/>
            <person name="Henderson N."/>
            <person name="Hernandez O."/>
            <person name="Hines S."/>
            <person name="Hogues M.E."/>
            <person name="Huang M."/>
            <person name="Idlebird D.G."/>
            <person name="Johnson R."/>
            <person name="Jolivet A."/>
            <person name="Jones S."/>
            <person name="Kagan R."/>
            <person name="King L.M."/>
            <person name="Leal B."/>
            <person name="Lebow H."/>
            <person name="Lee S."/>
            <person name="LeVan J.M."/>
            <person name="Lewis L.C."/>
            <person name="London P."/>
            <person name="Lorensuhewa L.M."/>
            <person name="Loulseged H."/>
            <person name="Lovett D.A."/>
            <person name="Lucier A."/>
            <person name="Lucier R.L."/>
            <person name="Ma J."/>
            <person name="Madu R.C."/>
            <person name="Mapua P."/>
            <person name="Martindale A.D."/>
            <person name="Martinez E."/>
            <person name="Massey E."/>
            <person name="Mawhiney S."/>
            <person name="Meador M.G."/>
            <person name="Mendez S."/>
            <person name="Mercado C."/>
            <person name="Mercado I.C."/>
            <person name="Merritt C.E."/>
            <person name="Miner Z.L."/>
            <person name="Minja E."/>
            <person name="Mitchell T."/>
            <person name="Mohabbat F."/>
            <person name="Mohabbat K."/>
            <person name="Montgomery B."/>
            <person name="Moore N."/>
            <person name="Morris S."/>
            <person name="Munidasa M."/>
            <person name="Ngo R.N."/>
            <person name="Nguyen N.B."/>
            <person name="Nickerson E."/>
            <person name="Nwaokelemeh O.O."/>
            <person name="Nwokenkwo S."/>
            <person name="Obregon M."/>
            <person name="Oguh M."/>
            <person name="Oragunye N."/>
            <person name="Oviedo R.J."/>
            <person name="Parish B.J."/>
            <person name="Parker D.N."/>
            <person name="Parrish J."/>
            <person name="Parks K.L."/>
            <person name="Paul H.A."/>
            <person name="Payton B.A."/>
            <person name="Perez A."/>
            <person name="Perrin W."/>
            <person name="Pickens A."/>
            <person name="Primus E.L."/>
            <person name="Pu L.-L."/>
            <person name="Puazo M."/>
            <person name="Quiles M.M."/>
            <person name="Quiroz J.B."/>
            <person name="Rabata D."/>
            <person name="Reeves K."/>
            <person name="Ruiz S.J."/>
            <person name="Shao H."/>
            <person name="Sisson I."/>
            <person name="Sonaike T."/>
            <person name="Sorelle R.P."/>
            <person name="Sutton A.E."/>
            <person name="Svatek A.F."/>
            <person name="Svetz L.A."/>
            <person name="Tamerisa K.S."/>
            <person name="Taylor T.R."/>
            <person name="Teague B."/>
            <person name="Thomas N."/>
            <person name="Thorn R.D."/>
            <person name="Trejos Z.Y."/>
            <person name="Trevino B.K."/>
            <person name="Ukegbu O.N."/>
            <person name="Urban J.B."/>
            <person name="Vasquez L.I."/>
            <person name="Vera V.A."/>
            <person name="Villasana D.M."/>
            <person name="Wang L."/>
            <person name="Ward-Moore S."/>
            <person name="Warren J.T."/>
            <person name="Wei X."/>
            <person name="White F."/>
            <person name="Williamson A.L."/>
            <person name="Wleczyk R."/>
            <person name="Wooden H.S."/>
            <person name="Wooden S.H."/>
            <person name="Yen J."/>
            <person name="Yoon L."/>
            <person name="Yoon V."/>
            <person name="Zorrilla S.E."/>
            <person name="Nelson D."/>
            <person name="Kucherlapati R."/>
            <person name="Weinstock G."/>
            <person name="Gibbs R.A."/>
        </authorList>
    </citation>
    <scope>NUCLEOTIDE SEQUENCE [LARGE SCALE GENOMIC DNA]</scope>
</reference>
<reference key="3">
    <citation type="journal article" date="2004" name="Genome Res.">
        <title>The status, quality, and expansion of the NIH full-length cDNA project: the Mammalian Gene Collection (MGC).</title>
        <authorList>
            <consortium name="The MGC Project Team"/>
        </authorList>
    </citation>
    <scope>NUCLEOTIDE SEQUENCE [LARGE SCALE MRNA] (ISOFORM 1)</scope>
    <source>
        <tissue>Placenta</tissue>
    </source>
</reference>
<reference key="4">
    <citation type="journal article" date="2018" name="Cell Chem. Biol.">
        <title>A Designed Peptide Targets Two Types of Modifications of p53 with Anti-cancer Activity.</title>
        <authorList>
            <person name="Liang L."/>
            <person name="Wang H."/>
            <person name="Shi H."/>
            <person name="Li Z."/>
            <person name="Yao H."/>
            <person name="Bu Z."/>
            <person name="Song N."/>
            <person name="Li C."/>
            <person name="Xiang D."/>
            <person name="Zhang Y."/>
            <person name="Wang J."/>
            <person name="Hu Y."/>
            <person name="Xu Q."/>
            <person name="Ma Y."/>
            <person name="Cheng Z."/>
            <person name="Wang Y."/>
            <person name="Zhao S."/>
            <person name="Qian J."/>
            <person name="Chen Y."/>
            <person name="Fang J.Y."/>
            <person name="Xu J."/>
        </authorList>
    </citation>
    <scope>FUNCTION</scope>
    <scope>INTERACTION WITH TP53; MDM2 AND SIRT1</scope>
</reference>
<name>MORN3_HUMAN</name>
<feature type="chain" id="PRO_0000247459" description="MORN repeat-containing protein 3">
    <location>
        <begin position="1"/>
        <end position="240"/>
    </location>
</feature>
<feature type="repeat" description="MORN 1">
    <location>
        <begin position="38"/>
        <end position="60"/>
    </location>
</feature>
<feature type="repeat" description="MORN 2">
    <location>
        <begin position="62"/>
        <end position="84"/>
    </location>
</feature>
<feature type="repeat" description="MORN 3">
    <location>
        <begin position="91"/>
        <end position="113"/>
    </location>
</feature>
<feature type="repeat" description="MORN 4">
    <location>
        <begin position="114"/>
        <end position="136"/>
    </location>
</feature>
<feature type="repeat" description="MORN 5">
    <location>
        <begin position="137"/>
        <end position="159"/>
    </location>
</feature>
<feature type="repeat" description="MORN 6">
    <location>
        <begin position="160"/>
        <end position="182"/>
    </location>
</feature>
<feature type="repeat" description="MORN 7">
    <location>
        <begin position="184"/>
        <end position="205"/>
    </location>
</feature>
<feature type="region of interest" description="Interaction with MDM2" evidence="2">
    <location>
        <begin position="6"/>
        <end position="35"/>
    </location>
</feature>
<feature type="region of interest" description="Interaction with SIRT1" evidence="2">
    <location>
        <begin position="76"/>
        <end position="100"/>
    </location>
</feature>
<feature type="region of interest" description="Interaction with TP53" evidence="2">
    <location>
        <begin position="206"/>
        <end position="240"/>
    </location>
</feature>
<feature type="splice variant" id="VSP_019996" description="In isoform 2." evidence="3">
    <original>KNGNRY</original>
    <variation>SQNPRP</variation>
    <location>
        <begin position="155"/>
        <end position="160"/>
    </location>
</feature>
<feature type="splice variant" id="VSP_019997" description="In isoform 2." evidence="3">
    <location>
        <begin position="161"/>
        <end position="240"/>
    </location>
</feature>
<feature type="sequence conflict" description="In Ref. 3; AAH57760." evidence="4" ref="3">
    <original>K</original>
    <variation>E</variation>
    <location>
        <position position="43"/>
    </location>
</feature>
<accession>Q6PF18</accession>
<accession>Q86YQ9</accession>
<gene>
    <name evidence="5" type="primary">MORN3</name>
</gene>
<comment type="function">
    <text evidence="1 2">Assembles a suppression complex (suppresome) by tethering SIRT1 and MDM2 to regulate composite modifications of p53/TP53. Confers both deacetylation-mediated functional inactivation, by SIRT1, and ubiquitination-dependent degradation, by MDM2, of p53/TP53, promoting a proliferative and cell survival behaviors (PubMed:29681526). May play a role in the regulation of spermatogenesis (By similarity).</text>
</comment>
<comment type="subunit">
    <text evidence="1 2">Interacts with MEIG1 (By similarity). Interacts with TP53, MDM2 and SIRT1; the interactions mediate post-transcriptional modifications of TP53 by MDM2 and SIRT1 (PubMed:29681526).</text>
</comment>
<comment type="interaction">
    <interactant intactId="EBI-9675802">
        <id>Q6PF18</id>
    </interactant>
    <interactant intactId="EBI-12318443">
        <id>Q8NFV4-4</id>
        <label>ABHD11</label>
    </interactant>
    <organismsDiffer>false</organismsDiffer>
    <experiments>3</experiments>
</comment>
<comment type="interaction">
    <interactant intactId="EBI-9675802">
        <id>Q6PF18</id>
    </interactant>
    <interactant intactId="EBI-10173507">
        <id>Q6UY14-3</id>
        <label>ADAMTSL4</label>
    </interactant>
    <organismsDiffer>false</organismsDiffer>
    <experiments>3</experiments>
</comment>
<comment type="interaction">
    <interactant intactId="EBI-9675802">
        <id>Q6PF18</id>
    </interactant>
    <interactant intactId="EBI-6925949">
        <id>Q9BYJ1</id>
        <label>ALOXE3</label>
    </interactant>
    <organismsDiffer>false</organismsDiffer>
    <experiments>2</experiments>
</comment>
<comment type="interaction">
    <interactant intactId="EBI-9675802">
        <id>Q6PF18</id>
    </interactant>
    <interactant intactId="EBI-948603">
        <id>Q03989</id>
        <label>ARID5A</label>
    </interactant>
    <organismsDiffer>false</organismsDiffer>
    <experiments>3</experiments>
</comment>
<comment type="interaction">
    <interactant intactId="EBI-9675802">
        <id>Q6PF18</id>
    </interactant>
    <interactant intactId="EBI-745073">
        <id>Q9BXY8</id>
        <label>BEX2</label>
    </interactant>
    <organismsDiffer>false</organismsDiffer>
    <experiments>3</experiments>
</comment>
<comment type="interaction">
    <interactant intactId="EBI-9675802">
        <id>Q6PF18</id>
    </interactant>
    <interactant intactId="EBI-2548012">
        <id>Q9H2G9</id>
        <label>BLZF1</label>
    </interactant>
    <organismsDiffer>false</organismsDiffer>
    <experiments>3</experiments>
</comment>
<comment type="interaction">
    <interactant intactId="EBI-9675802">
        <id>Q6PF18</id>
    </interactant>
    <interactant intactId="EBI-725606">
        <id>Q9NWQ9</id>
        <label>C14orf119</label>
    </interactant>
    <organismsDiffer>false</organismsDiffer>
    <experiments>3</experiments>
</comment>
<comment type="interaction">
    <interactant intactId="EBI-9675802">
        <id>Q6PF18</id>
    </interactant>
    <interactant intactId="EBI-5278764">
        <id>Q96GN5</id>
        <label>CDCA7L</label>
    </interactant>
    <organismsDiffer>false</organismsDiffer>
    <experiments>3</experiments>
</comment>
<comment type="interaction">
    <interactant intactId="EBI-9675802">
        <id>Q6PF18</id>
    </interactant>
    <interactant intactId="EBI-12160437">
        <id>A8MTA8-2</id>
        <label>CIMIP2B</label>
    </interactant>
    <organismsDiffer>false</organismsDiffer>
    <experiments>3</experiments>
</comment>
<comment type="interaction">
    <interactant intactId="EBI-9675802">
        <id>Q6PF18</id>
    </interactant>
    <interactant intactId="EBI-751587">
        <id>Q9GZU7</id>
        <label>CTDSP1</label>
    </interactant>
    <organismsDiffer>false</organismsDiffer>
    <experiments>3</experiments>
</comment>
<comment type="interaction">
    <interactant intactId="EBI-9675802">
        <id>Q6PF18</id>
    </interactant>
    <interactant intactId="EBI-349105">
        <id>P63167</id>
        <label>DYNLL1</label>
    </interactant>
    <organismsDiffer>false</organismsDiffer>
    <experiments>3</experiments>
</comment>
<comment type="interaction">
    <interactant intactId="EBI-9675802">
        <id>Q6PF18</id>
    </interactant>
    <interactant intactId="EBI-742371">
        <id>Q96FJ2</id>
        <label>DYNLL2</label>
    </interactant>
    <organismsDiffer>false</organismsDiffer>
    <experiments>4</experiments>
</comment>
<comment type="interaction">
    <interactant intactId="EBI-9675802">
        <id>Q6PF18</id>
    </interactant>
    <interactant intactId="EBI-353818">
        <id>O15371</id>
        <label>EIF3D</label>
    </interactant>
    <organismsDiffer>false</organismsDiffer>
    <experiments>3</experiments>
</comment>
<comment type="interaction">
    <interactant intactId="EBI-9675802">
        <id>Q6PF18</id>
    </interactant>
    <interactant intactId="EBI-744099">
        <id>Q9H0I2</id>
        <label>ENKD1</label>
    </interactant>
    <organismsDiffer>false</organismsDiffer>
    <experiments>3</experiments>
</comment>
<comment type="interaction">
    <interactant intactId="EBI-9675802">
        <id>Q6PF18</id>
    </interactant>
    <interactant intactId="EBI-6658203">
        <id>Q86YD7</id>
        <label>FAM90A1</label>
    </interactant>
    <organismsDiffer>false</organismsDiffer>
    <experiments>3</experiments>
</comment>
<comment type="interaction">
    <interactant intactId="EBI-9675802">
        <id>Q6PF18</id>
    </interactant>
    <interactant intactId="EBI-2339898">
        <id>Q9NW38</id>
        <label>FANCL</label>
    </interactant>
    <organismsDiffer>false</organismsDiffer>
    <experiments>3</experiments>
</comment>
<comment type="interaction">
    <interactant intactId="EBI-9675802">
        <id>Q6PF18</id>
    </interactant>
    <interactant intactId="EBI-2513774">
        <id>O95363</id>
        <label>FARS2</label>
    </interactant>
    <organismsDiffer>false</organismsDiffer>
    <experiments>3</experiments>
</comment>
<comment type="interaction">
    <interactant intactId="EBI-9675802">
        <id>Q6PF18</id>
    </interactant>
    <interactant intactId="EBI-18138793">
        <id>Q9C0B1-2</id>
        <label>FTO</label>
    </interactant>
    <organismsDiffer>false</organismsDiffer>
    <experiments>3</experiments>
</comment>
<comment type="interaction">
    <interactant intactId="EBI-9675802">
        <id>Q6PF18</id>
    </interactant>
    <interactant intactId="EBI-744104">
        <id>P55040</id>
        <label>GEM</label>
    </interactant>
    <organismsDiffer>false</organismsDiffer>
    <experiments>3</experiments>
</comment>
<comment type="interaction">
    <interactant intactId="EBI-9675802">
        <id>Q6PF18</id>
    </interactant>
    <interactant intactId="EBI-748515">
        <id>Q8IVS8</id>
        <label>GLYCTK</label>
    </interactant>
    <organismsDiffer>false</organismsDiffer>
    <experiments>3</experiments>
</comment>
<comment type="interaction">
    <interactant intactId="EBI-9675802">
        <id>Q6PF18</id>
    </interactant>
    <interactant intactId="EBI-618309">
        <id>Q08379</id>
        <label>GOLGA2</label>
    </interactant>
    <organismsDiffer>false</organismsDiffer>
    <experiments>8</experiments>
</comment>
<comment type="interaction">
    <interactant intactId="EBI-9675802">
        <id>Q6PF18</id>
    </interactant>
    <interactant intactId="EBI-751540">
        <id>O95872</id>
        <label>GPANK1</label>
    </interactant>
    <organismsDiffer>false</organismsDiffer>
    <experiments>3</experiments>
</comment>
<comment type="interaction">
    <interactant intactId="EBI-9675802">
        <id>Q6PF18</id>
    </interactant>
    <interactant intactId="EBI-11978177">
        <id>Q96NT3-2</id>
        <label>GUCD1</label>
    </interactant>
    <organismsDiffer>false</organismsDiffer>
    <experiments>3</experiments>
</comment>
<comment type="interaction">
    <interactant intactId="EBI-9675802">
        <id>Q6PF18</id>
    </interactant>
    <interactant intactId="EBI-749065">
        <id>Q9BQA5</id>
        <label>HINFP</label>
    </interactant>
    <organismsDiffer>false</organismsDiffer>
    <experiments>3</experiments>
</comment>
<comment type="interaction">
    <interactant intactId="EBI-9675802">
        <id>Q6PF18</id>
    </interactant>
    <interactant intactId="EBI-10961706">
        <id>Q96ED9-2</id>
        <label>HOOK2</label>
    </interactant>
    <organismsDiffer>false</organismsDiffer>
    <experiments>3</experiments>
</comment>
<comment type="interaction">
    <interactant intactId="EBI-9675802">
        <id>Q6PF18</id>
    </interactant>
    <interactant intactId="EBI-5329558">
        <id>P14652</id>
        <label>HOXB2</label>
    </interactant>
    <organismsDiffer>false</organismsDiffer>
    <experiments>3</experiments>
</comment>
<comment type="interaction">
    <interactant intactId="EBI-9675802">
        <id>Q6PF18</id>
    </interactant>
    <interactant intactId="EBI-747204">
        <id>Q9UKT9</id>
        <label>IKZF3</label>
    </interactant>
    <organismsDiffer>false</organismsDiffer>
    <experiments>7</experiments>
</comment>
<comment type="interaction">
    <interactant intactId="EBI-9675802">
        <id>Q6PF18</id>
    </interactant>
    <interactant intactId="EBI-715611">
        <id>Q9C086</id>
        <label>INO80B</label>
    </interactant>
    <organismsDiffer>false</organismsDiffer>
    <experiments>3</experiments>
</comment>
<comment type="interaction">
    <interactant intactId="EBI-9675802">
        <id>Q6PF18</id>
    </interactant>
    <interactant intactId="EBI-2556193">
        <id>Q63ZY3</id>
        <label>KANK2</label>
    </interactant>
    <organismsDiffer>false</organismsDiffer>
    <experiments>3</experiments>
</comment>
<comment type="interaction">
    <interactant intactId="EBI-9675802">
        <id>Q6PF18</id>
    </interactant>
    <interactant intactId="EBI-6426443">
        <id>Q2WGJ6</id>
        <label>KLHL38</label>
    </interactant>
    <organismsDiffer>false</organismsDiffer>
    <experiments>3</experiments>
</comment>
<comment type="interaction">
    <interactant intactId="EBI-9675802">
        <id>Q6PF18</id>
    </interactant>
    <interactant intactId="EBI-739566">
        <id>P19012</id>
        <label>KRT15</label>
    </interactant>
    <organismsDiffer>false</organismsDiffer>
    <experiments>3</experiments>
</comment>
<comment type="interaction">
    <interactant intactId="EBI-9675802">
        <id>Q6PF18</id>
    </interactant>
    <interactant intactId="EBI-12179869">
        <id>P50458</id>
        <label>LHX2</label>
    </interactant>
    <organismsDiffer>false</organismsDiffer>
    <experiments>3</experiments>
</comment>
<comment type="interaction">
    <interactant intactId="EBI-9675802">
        <id>Q6PF18</id>
    </interactant>
    <interactant intactId="EBI-741037">
        <id>Q9BRK4</id>
        <label>LZTS2</label>
    </interactant>
    <organismsDiffer>false</organismsDiffer>
    <experiments>3</experiments>
</comment>
<comment type="interaction">
    <interactant intactId="EBI-9675802">
        <id>Q6PF18</id>
    </interactant>
    <interactant intactId="EBI-1045155">
        <id>P43360</id>
        <label>MAGEA6</label>
    </interactant>
    <organismsDiffer>false</organismsDiffer>
    <experiments>6</experiments>
</comment>
<comment type="interaction">
    <interactant intactId="EBI-9675802">
        <id>Q6PF18</id>
    </interactant>
    <interactant intactId="EBI-11323212">
        <id>Q8IYB1</id>
        <label>MB21D2</label>
    </interactant>
    <organismsDiffer>false</organismsDiffer>
    <experiments>3</experiments>
</comment>
<comment type="interaction">
    <interactant intactId="EBI-9675802">
        <id>Q6PF18</id>
    </interactant>
    <interactant intactId="EBI-748397">
        <id>P50222</id>
        <label>MEOX2</label>
    </interactant>
    <organismsDiffer>false</organismsDiffer>
    <experiments>3</experiments>
</comment>
<comment type="interaction">
    <interactant intactId="EBI-9675802">
        <id>Q6PF18</id>
    </interactant>
    <interactant intactId="EBI-2555085">
        <id>Q8IVT2</id>
        <label>MISP</label>
    </interactant>
    <organismsDiffer>false</organismsDiffer>
    <experiments>3</experiments>
</comment>
<comment type="interaction">
    <interactant intactId="EBI-9675802">
        <id>Q6PF18</id>
    </interactant>
    <interactant intactId="EBI-2340269">
        <id>Q13064</id>
        <label>MKRN3</label>
    </interactant>
    <organismsDiffer>false</organismsDiffer>
    <experiments>3</experiments>
</comment>
<comment type="interaction">
    <interactant intactId="EBI-9675802">
        <id>Q6PF18</id>
    </interactant>
    <interactant intactId="EBI-744248">
        <id>P40692</id>
        <label>MLH1</label>
    </interactant>
    <organismsDiffer>false</organismsDiffer>
    <experiments>3</experiments>
</comment>
<comment type="interaction">
    <interactant intactId="EBI-9675802">
        <id>Q6PF18</id>
    </interactant>
    <interactant intactId="EBI-5662487">
        <id>Q8TDC0</id>
        <label>MYOZ3</label>
    </interactant>
    <organismsDiffer>false</organismsDiffer>
    <experiments>3</experiments>
</comment>
<comment type="interaction">
    <interactant intactId="EBI-9675802">
        <id>Q6PF18</id>
    </interactant>
    <interactant intactId="EBI-1246261">
        <id>O14561</id>
        <label>NDUFAB1</label>
    </interactant>
    <organismsDiffer>false</organismsDiffer>
    <experiments>3</experiments>
</comment>
<comment type="interaction">
    <interactant intactId="EBI-9675802">
        <id>Q6PF18</id>
    </interactant>
    <interactant intactId="EBI-725252">
        <id>Q9UMS0</id>
        <label>NFU1</label>
    </interactant>
    <organismsDiffer>false</organismsDiffer>
    <experiments>3</experiments>
</comment>
<comment type="interaction">
    <interactant intactId="EBI-9675802">
        <id>Q6PF18</id>
    </interactant>
    <interactant intactId="EBI-12025760">
        <id>Q86UR1-2</id>
        <label>NOXA1</label>
    </interactant>
    <organismsDiffer>false</organismsDiffer>
    <experiments>3</experiments>
</comment>
<comment type="interaction">
    <interactant intactId="EBI-9675802">
        <id>Q6PF18</id>
    </interactant>
    <interactant intactId="EBI-741158">
        <id>Q96HA8</id>
        <label>NTAQ1</label>
    </interactant>
    <organismsDiffer>false</organismsDiffer>
    <experiments>3</experiments>
</comment>
<comment type="interaction">
    <interactant intactId="EBI-9675802">
        <id>Q6PF18</id>
    </interactant>
    <interactant intactId="EBI-536879">
        <id>O43482</id>
        <label>OIP5</label>
    </interactant>
    <organismsDiffer>false</organismsDiffer>
    <experiments>3</experiments>
</comment>
<comment type="interaction">
    <interactant intactId="EBI-9675802">
        <id>Q6PF18</id>
    </interactant>
    <interactant intactId="EBI-747278">
        <id>P26367</id>
        <label>PAX6</label>
    </interactant>
    <organismsDiffer>false</organismsDiffer>
    <experiments>3</experiments>
</comment>
<comment type="interaction">
    <interactant intactId="EBI-9675802">
        <id>Q6PF18</id>
    </interactant>
    <interactant intactId="EBI-530034">
        <id>O43189</id>
        <label>PHF1</label>
    </interactant>
    <organismsDiffer>false</organismsDiffer>
    <experiments>3</experiments>
</comment>
<comment type="interaction">
    <interactant intactId="EBI-9675802">
        <id>Q6PF18</id>
    </interactant>
    <interactant intactId="EBI-79165">
        <id>Q9NRD5</id>
        <label>PICK1</label>
    </interactant>
    <organismsDiffer>false</organismsDiffer>
    <experiments>3</experiments>
</comment>
<comment type="interaction">
    <interactant intactId="EBI-9675802">
        <id>Q6PF18</id>
    </interactant>
    <interactant intactId="EBI-1055079">
        <id>O15160</id>
        <label>POLR1C</label>
    </interactant>
    <organismsDiffer>false</organismsDiffer>
    <experiments>3</experiments>
</comment>
<comment type="interaction">
    <interactant intactId="EBI-9675802">
        <id>Q6PF18</id>
    </interactant>
    <interactant intactId="EBI-1383852">
        <id>P54646</id>
        <label>PRKAA2</label>
    </interactant>
    <organismsDiffer>false</organismsDiffer>
    <experiments>3</experiments>
</comment>
<comment type="interaction">
    <interactant intactId="EBI-9675802">
        <id>Q6PF18</id>
    </interactant>
    <interactant intactId="EBI-1053424">
        <id>O43741</id>
        <label>PRKAB2</label>
    </interactant>
    <organismsDiffer>false</organismsDiffer>
    <experiments>3</experiments>
</comment>
<comment type="interaction">
    <interactant intactId="EBI-9675802">
        <id>Q6PF18</id>
    </interactant>
    <interactant intactId="EBI-1567866">
        <id>Q6MZQ0</id>
        <label>PRR5L</label>
    </interactant>
    <organismsDiffer>false</organismsDiffer>
    <experiments>3</experiments>
</comment>
<comment type="interaction">
    <interactant intactId="EBI-9675802">
        <id>Q6PF18</id>
    </interactant>
    <interactant intactId="EBI-12235180">
        <id>Q9H2S5</id>
        <label>RNF39</label>
    </interactant>
    <organismsDiffer>false</organismsDiffer>
    <experiments>3</experiments>
</comment>
<comment type="interaction">
    <interactant intactId="EBI-9675802">
        <id>Q6PF18</id>
    </interactant>
    <interactant intactId="EBI-10253582">
        <id>Q8WYR4</id>
        <label>RSPH1</label>
    </interactant>
    <organismsDiffer>false</organismsDiffer>
    <experiments>7</experiments>
</comment>
<comment type="interaction">
    <interactant intactId="EBI-9675802">
        <id>Q6PF18</id>
    </interactant>
    <interactant intactId="EBI-6257312">
        <id>Q9BVN2</id>
        <label>RUSC1</label>
    </interactant>
    <organismsDiffer>false</organismsDiffer>
    <experiments>3</experiments>
</comment>
<comment type="interaction">
    <interactant intactId="EBI-9675802">
        <id>Q6PF18</id>
    </interactant>
    <interactant intactId="EBI-748391">
        <id>Q9BWG6</id>
        <label>SCNM1</label>
    </interactant>
    <organismsDiffer>false</organismsDiffer>
    <experiments>5</experiments>
</comment>
<comment type="interaction">
    <interactant intactId="EBI-9675802">
        <id>Q6PF18</id>
    </interactant>
    <interactant intactId="EBI-747035">
        <id>Q9H788</id>
        <label>SH2D4A</label>
    </interactant>
    <organismsDiffer>false</organismsDiffer>
    <experiments>3</experiments>
</comment>
<comment type="interaction">
    <interactant intactId="EBI-9675802">
        <id>Q6PF18</id>
    </interactant>
    <interactant intactId="EBI-3505701">
        <id>P35711</id>
        <label>SOX5</label>
    </interactant>
    <organismsDiffer>false</organismsDiffer>
    <experiments>3</experiments>
</comment>
<comment type="interaction">
    <interactant intactId="EBI-9675802">
        <id>Q6PF18</id>
    </interactant>
    <interactant intactId="EBI-3921347">
        <id>P51687</id>
        <label>SUOX</label>
    </interactant>
    <organismsDiffer>false</organismsDiffer>
    <experiments>3</experiments>
</comment>
<comment type="interaction">
    <interactant intactId="EBI-9675802">
        <id>Q6PF18</id>
    </interactant>
    <interactant intactId="EBI-10172380">
        <id>Q5VWN6-2</id>
        <label>TASOR2</label>
    </interactant>
    <organismsDiffer>false</organismsDiffer>
    <experiments>3</experiments>
</comment>
<comment type="interaction">
    <interactant intactId="EBI-9675802">
        <id>Q6PF18</id>
    </interactant>
    <interactant intactId="EBI-750487">
        <id>Q8WW24</id>
        <label>TEKT4</label>
    </interactant>
    <organismsDiffer>false</organismsDiffer>
    <experiments>3</experiments>
</comment>
<comment type="interaction">
    <interactant intactId="EBI-9675802">
        <id>Q6PF18</id>
    </interactant>
    <interactant intactId="EBI-359224">
        <id>Q13077</id>
        <label>TRAF1</label>
    </interactant>
    <organismsDiffer>false</organismsDiffer>
    <experiments>8</experiments>
</comment>
<comment type="interaction">
    <interactant intactId="EBI-9675802">
        <id>Q6PF18</id>
    </interactant>
    <interactant intactId="EBI-355744">
        <id>Q12933</id>
        <label>TRAF2</label>
    </interactant>
    <organismsDiffer>false</organismsDiffer>
    <experiments>6</experiments>
</comment>
<comment type="interaction">
    <interactant intactId="EBI-9675802">
        <id>Q6PF18</id>
    </interactant>
    <interactant intactId="EBI-358993">
        <id>Q15645</id>
        <label>TRIP13</label>
    </interactant>
    <organismsDiffer>false</organismsDiffer>
    <experiments>3</experiments>
</comment>
<comment type="interaction">
    <interactant intactId="EBI-9675802">
        <id>Q6PF18</id>
    </interactant>
    <interactant intactId="EBI-11962468">
        <id>Q7Z4V0</id>
        <label>ZNF438</label>
    </interactant>
    <organismsDiffer>false</organismsDiffer>
    <experiments>3</experiments>
</comment>
<comment type="interaction">
    <interactant intactId="EBI-9675802">
        <id>Q6PF18</id>
    </interactant>
    <interactant intactId="EBI-7254550">
        <id>P36508</id>
        <label>ZNF76</label>
    </interactant>
    <organismsDiffer>false</organismsDiffer>
    <experiments>3</experiments>
</comment>
<comment type="subcellular location">
    <subcellularLocation>
        <location evidence="1">Cytoplasmic vesicle</location>
        <location evidence="1">Secretory vesicle</location>
        <location evidence="1">Acrosome</location>
    </subcellularLocation>
    <text evidence="1">Localized in the acrosome in germ cells throughout spermiogenesis, it is also present in the manchette of elongating spermatids.</text>
</comment>
<comment type="alternative products">
    <event type="alternative splicing"/>
    <isoform>
        <id>Q6PF18-1</id>
        <name>1</name>
        <sequence type="displayed"/>
    </isoform>
    <isoform>
        <id>Q6PF18-2</id>
        <name>2</name>
        <sequence type="described" ref="VSP_019996 VSP_019997"/>
    </isoform>
</comment>
<organism>
    <name type="scientific">Homo sapiens</name>
    <name type="common">Human</name>
    <dbReference type="NCBI Taxonomy" id="9606"/>
    <lineage>
        <taxon>Eukaryota</taxon>
        <taxon>Metazoa</taxon>
        <taxon>Chordata</taxon>
        <taxon>Craniata</taxon>
        <taxon>Vertebrata</taxon>
        <taxon>Euteleostomi</taxon>
        <taxon>Mammalia</taxon>
        <taxon>Eutheria</taxon>
        <taxon>Euarchontoglires</taxon>
        <taxon>Primates</taxon>
        <taxon>Haplorrhini</taxon>
        <taxon>Catarrhini</taxon>
        <taxon>Hominidae</taxon>
        <taxon>Homo</taxon>
    </lineage>
</organism>
<sequence length="240" mass="27585">MPVSKCPKKSESLWKGWDRKAQRNGLRSQVYAVNGDYYVGEWKDNVKHGKGTQVWKKKGAIYEGDWKFGKRDGYGTLSLPDQQTGKCRRVYSGWWKGDKKSGYGIQFFGPKEYYEGDWCGSQRSGWGRMYYSNGDIYEGQWENDKPNGEGMLRLKNGNRYEGCWERGMKNGAGRFFHLDHGQLFEGFWVDNMAKCGTMIDFGRDEAPEPTQFPIPEVKILDPDGVLAEALAMFRKTEEGD</sequence>
<dbReference type="EMBL" id="AY177732">
    <property type="protein sequence ID" value="AAO18675.1"/>
    <property type="molecule type" value="mRNA"/>
</dbReference>
<dbReference type="EMBL" id="AC084018">
    <property type="status" value="NOT_ANNOTATED_CDS"/>
    <property type="molecule type" value="Genomic_DNA"/>
</dbReference>
<dbReference type="EMBL" id="AC140062">
    <property type="status" value="NOT_ANNOTATED_CDS"/>
    <property type="molecule type" value="Genomic_DNA"/>
</dbReference>
<dbReference type="EMBL" id="BC057760">
    <property type="protein sequence ID" value="AAH57760.1"/>
    <property type="molecule type" value="mRNA"/>
</dbReference>
<dbReference type="CCDS" id="CCDS31917.1">
    <molecule id="Q6PF18-1"/>
</dbReference>
<dbReference type="RefSeq" id="NP_001350614.1">
    <molecule id="Q6PF18-1"/>
    <property type="nucleotide sequence ID" value="NM_001363685.2"/>
</dbReference>
<dbReference type="RefSeq" id="NP_776254.3">
    <molecule id="Q6PF18-1"/>
    <property type="nucleotide sequence ID" value="NM_173855.5"/>
</dbReference>
<dbReference type="RefSeq" id="XP_005253926.1">
    <property type="nucleotide sequence ID" value="XM_005253869.4"/>
</dbReference>
<dbReference type="RefSeq" id="XP_011536515.1">
    <property type="nucleotide sequence ID" value="XM_011538213.2"/>
</dbReference>
<dbReference type="PDB" id="8J07">
    <property type="method" value="EM"/>
    <property type="resolution" value="4.10 A"/>
    <property type="chains" value="c1=1-240"/>
</dbReference>
<dbReference type="PDBsum" id="8J07"/>
<dbReference type="EMDB" id="EMD-35888"/>
<dbReference type="SMR" id="Q6PF18"/>
<dbReference type="BioGRID" id="129545">
    <property type="interactions" value="69"/>
</dbReference>
<dbReference type="FunCoup" id="Q6PF18">
    <property type="interactions" value="885"/>
</dbReference>
<dbReference type="IntAct" id="Q6PF18">
    <property type="interactions" value="72"/>
</dbReference>
<dbReference type="MINT" id="Q6PF18"/>
<dbReference type="STRING" id="9606.ENSP00000347486"/>
<dbReference type="iPTMnet" id="Q6PF18"/>
<dbReference type="PhosphoSitePlus" id="Q6PF18"/>
<dbReference type="BioMuta" id="MORN3"/>
<dbReference type="DMDM" id="296438295"/>
<dbReference type="MassIVE" id="Q6PF18"/>
<dbReference type="PaxDb" id="9606-ENSP00000347486"/>
<dbReference type="PeptideAtlas" id="Q6PF18"/>
<dbReference type="ProteomicsDB" id="67103">
    <molecule id="Q6PF18-1"/>
</dbReference>
<dbReference type="ProteomicsDB" id="67104">
    <molecule id="Q6PF18-2"/>
</dbReference>
<dbReference type="Antibodypedia" id="64782">
    <property type="antibodies" value="89 antibodies from 15 providers"/>
</dbReference>
<dbReference type="DNASU" id="283385"/>
<dbReference type="Ensembl" id="ENST00000355329.7">
    <molecule id="Q6PF18-1"/>
    <property type="protein sequence ID" value="ENSP00000347486.3"/>
    <property type="gene ID" value="ENSG00000139714.12"/>
</dbReference>
<dbReference type="Ensembl" id="ENST00000392462.6">
    <molecule id="Q6PF18-2"/>
    <property type="protein sequence ID" value="ENSP00000376255.2"/>
    <property type="gene ID" value="ENSG00000139714.12"/>
</dbReference>
<dbReference type="Ensembl" id="ENST00000542364.1">
    <molecule id="Q6PF18-2"/>
    <property type="protein sequence ID" value="ENSP00000445643.1"/>
    <property type="gene ID" value="ENSG00000139714.12"/>
</dbReference>
<dbReference type="GeneID" id="283385"/>
<dbReference type="KEGG" id="hsa:283385"/>
<dbReference type="MANE-Select" id="ENST00000355329.7">
    <property type="protein sequence ID" value="ENSP00000347486.3"/>
    <property type="RefSeq nucleotide sequence ID" value="NM_173855.5"/>
    <property type="RefSeq protein sequence ID" value="NP_776254.3"/>
</dbReference>
<dbReference type="UCSC" id="uc001uax.4">
    <molecule id="Q6PF18-1"/>
    <property type="organism name" value="human"/>
</dbReference>
<dbReference type="AGR" id="HGNC:29807"/>
<dbReference type="CTD" id="283385"/>
<dbReference type="DisGeNET" id="283385"/>
<dbReference type="GeneCards" id="MORN3"/>
<dbReference type="HGNC" id="HGNC:29807">
    <property type="gene designation" value="MORN3"/>
</dbReference>
<dbReference type="HPA" id="ENSG00000139714">
    <property type="expression patterns" value="Tissue enhanced (choroid plexus, testis)"/>
</dbReference>
<dbReference type="neXtProt" id="NX_Q6PF18"/>
<dbReference type="OpenTargets" id="ENSG00000139714"/>
<dbReference type="PharmGKB" id="PA143485546"/>
<dbReference type="VEuPathDB" id="HostDB:ENSG00000139714"/>
<dbReference type="eggNOG" id="KOG0231">
    <property type="taxonomic scope" value="Eukaryota"/>
</dbReference>
<dbReference type="GeneTree" id="ENSGT00940000159285"/>
<dbReference type="HOGENOM" id="CLU_032017_3_0_1"/>
<dbReference type="InParanoid" id="Q6PF18"/>
<dbReference type="OMA" id="GHGRFFH"/>
<dbReference type="OrthoDB" id="270720at2759"/>
<dbReference type="PAN-GO" id="Q6PF18">
    <property type="GO annotations" value="0 GO annotations based on evolutionary models"/>
</dbReference>
<dbReference type="PhylomeDB" id="Q6PF18"/>
<dbReference type="TreeFam" id="TF323893"/>
<dbReference type="PathwayCommons" id="Q6PF18"/>
<dbReference type="SignaLink" id="Q6PF18"/>
<dbReference type="BioGRID-ORCS" id="283385">
    <property type="hits" value="26 hits in 1146 CRISPR screens"/>
</dbReference>
<dbReference type="ChiTaRS" id="MORN3">
    <property type="organism name" value="human"/>
</dbReference>
<dbReference type="GenomeRNAi" id="283385"/>
<dbReference type="Pharos" id="Q6PF18">
    <property type="development level" value="Tdark"/>
</dbReference>
<dbReference type="PRO" id="PR:Q6PF18"/>
<dbReference type="Proteomes" id="UP000005640">
    <property type="component" value="Chromosome 12"/>
</dbReference>
<dbReference type="RNAct" id="Q6PF18">
    <property type="molecule type" value="protein"/>
</dbReference>
<dbReference type="Bgee" id="ENSG00000139714">
    <property type="expression patterns" value="Expressed in sperm and 136 other cell types or tissues"/>
</dbReference>
<dbReference type="ExpressionAtlas" id="Q6PF18">
    <property type="expression patterns" value="baseline and differential"/>
</dbReference>
<dbReference type="GO" id="GO:0001669">
    <property type="term" value="C:acrosomal vesicle"/>
    <property type="evidence" value="ECO:0007669"/>
    <property type="project" value="UniProtKB-SubCell"/>
</dbReference>
<dbReference type="GO" id="GO:0005634">
    <property type="term" value="C:nucleus"/>
    <property type="evidence" value="ECO:0007005"/>
    <property type="project" value="UniProtKB"/>
</dbReference>
<dbReference type="GO" id="GO:0030674">
    <property type="term" value="F:protein-macromolecule adaptor activity"/>
    <property type="evidence" value="ECO:0000314"/>
    <property type="project" value="UniProt"/>
</dbReference>
<dbReference type="GO" id="GO:1901797">
    <property type="term" value="P:negative regulation of signal transduction by p53 class mediator"/>
    <property type="evidence" value="ECO:0000314"/>
    <property type="project" value="UniProt"/>
</dbReference>
<dbReference type="FunFam" id="2.20.110.10:FF:000026">
    <property type="entry name" value="MORN repeat containing 3"/>
    <property type="match status" value="1"/>
</dbReference>
<dbReference type="FunFam" id="2.20.110.10:FF:000018">
    <property type="entry name" value="MORN repeat-containing protein 3"/>
    <property type="match status" value="1"/>
</dbReference>
<dbReference type="Gene3D" id="2.20.110.10">
    <property type="entry name" value="Histone H3 K4-specific methyltransferase SET7/9 N-terminal domain"/>
    <property type="match status" value="3"/>
</dbReference>
<dbReference type="InterPro" id="IPR003409">
    <property type="entry name" value="MORN"/>
</dbReference>
<dbReference type="InterPro" id="IPR052472">
    <property type="entry name" value="MORN3"/>
</dbReference>
<dbReference type="PANTHER" id="PTHR46511">
    <property type="entry name" value="MORN REPEAT-CONTAINING PROTEIN 3"/>
    <property type="match status" value="1"/>
</dbReference>
<dbReference type="PANTHER" id="PTHR46511:SF1">
    <property type="entry name" value="MORN REPEAT-CONTAINING PROTEIN 3"/>
    <property type="match status" value="1"/>
</dbReference>
<dbReference type="Pfam" id="PF02493">
    <property type="entry name" value="MORN"/>
    <property type="match status" value="5"/>
</dbReference>
<dbReference type="SMART" id="SM00698">
    <property type="entry name" value="MORN"/>
    <property type="match status" value="6"/>
</dbReference>
<dbReference type="SUPFAM" id="SSF82185">
    <property type="entry name" value="Histone H3 K4-specific methyltransferase SET7/9 N-terminal domain"/>
    <property type="match status" value="2"/>
</dbReference>
<protein>
    <recommendedName>
        <fullName>MORN repeat-containing protein 3</fullName>
    </recommendedName>
</protein>
<proteinExistence type="evidence at protein level"/>
<evidence type="ECO:0000250" key="1">
    <source>
        <dbReference type="UniProtKB" id="Q8C5T4"/>
    </source>
</evidence>
<evidence type="ECO:0000269" key="2">
    <source>
    </source>
</evidence>
<evidence type="ECO:0000303" key="3">
    <source ref="1"/>
</evidence>
<evidence type="ECO:0000305" key="4"/>
<evidence type="ECO:0000312" key="5">
    <source>
        <dbReference type="HGNC" id="HGNC:29807"/>
    </source>
</evidence>
<keyword id="KW-0002">3D-structure</keyword>
<keyword id="KW-0025">Alternative splicing</keyword>
<keyword id="KW-0968">Cytoplasmic vesicle</keyword>
<keyword id="KW-1267">Proteomics identification</keyword>
<keyword id="KW-1185">Reference proteome</keyword>
<keyword id="KW-0677">Repeat</keyword>